<accession>Q5XIZ6</accession>
<comment type="function">
    <text evidence="2">Plays a role in regulating cardiac sodium current.</text>
</comment>
<comment type="catalytic activity">
    <reaction evidence="2">
        <text>sn-glycerol 3-phosphate + NAD(+) = dihydroxyacetone phosphate + NADH + H(+)</text>
        <dbReference type="Rhea" id="RHEA:11092"/>
        <dbReference type="ChEBI" id="CHEBI:15378"/>
        <dbReference type="ChEBI" id="CHEBI:57540"/>
        <dbReference type="ChEBI" id="CHEBI:57597"/>
        <dbReference type="ChEBI" id="CHEBI:57642"/>
        <dbReference type="ChEBI" id="CHEBI:57945"/>
        <dbReference type="EC" id="1.1.1.8"/>
    </reaction>
    <physiologicalReaction direction="left-to-right" evidence="2">
        <dbReference type="Rhea" id="RHEA:11093"/>
    </physiologicalReaction>
</comment>
<comment type="subcellular location">
    <subcellularLocation>
        <location evidence="3">Cytoplasm</location>
    </subcellularLocation>
</comment>
<comment type="similarity">
    <text evidence="3">Belongs to the NAD-dependent glycerol-3-phosphate dehydrogenase family.</text>
</comment>
<sequence>MAAPLKVCIVGSGNWGSAIARIIGSNAQKLQCFATTVKMWVYEEMVNGKKLSEIINTEHENVKYLPGYKLPENVVAVPQLRDAADGADLLVFVVPHQFIRKLCDEMMGCVSERARGITLIKGIDEGPEGLKLISDIIREKMGIDVSVLMGANIANEVAAEKFCESTIGSKVLENGLLFKDLLQTPNFRITVVDDADTVELCGALKNIVAVGAGFCDGLQCGDNTKAAVIRLGLMEMIAFAKLFSKDDSVSSATFLESCGVADLITTCYGGRNRRVAEAFAKTGKSIEELEKEMLNGQKLQGPLTSAEVYHILKQKGLVEKFPLFTAVYQICFEDKPVRDMITCLQSHPEHL</sequence>
<proteinExistence type="evidence at transcript level"/>
<keyword id="KW-0963">Cytoplasm</keyword>
<keyword id="KW-0520">NAD</keyword>
<keyword id="KW-0560">Oxidoreductase</keyword>
<keyword id="KW-1185">Reference proteome</keyword>
<reference key="1">
    <citation type="submission" date="2004-10" db="EMBL/GenBank/DDBJ databases">
        <authorList>
            <consortium name="NIH - Zebrafish Gene Collection (ZGC) project"/>
        </authorList>
    </citation>
    <scope>NUCLEOTIDE SEQUENCE [LARGE SCALE MRNA]</scope>
</reference>
<gene>
    <name type="primary">gpd1l</name>
</gene>
<evidence type="ECO:0000250" key="1"/>
<evidence type="ECO:0000250" key="2">
    <source>
        <dbReference type="UniProtKB" id="Q8N335"/>
    </source>
</evidence>
<evidence type="ECO:0000305" key="3"/>
<feature type="chain" id="PRO_0000286514" description="Glycerol-3-phosphate dehydrogenase 1-like protein">
    <location>
        <begin position="1"/>
        <end position="351"/>
    </location>
</feature>
<feature type="active site" description="Proton acceptor" evidence="1">
    <location>
        <position position="205"/>
    </location>
</feature>
<feature type="binding site" evidence="2">
    <location>
        <begin position="11"/>
        <end position="16"/>
    </location>
    <ligand>
        <name>NAD(+)</name>
        <dbReference type="ChEBI" id="CHEBI:57540"/>
    </ligand>
</feature>
<feature type="binding site" evidence="1">
    <location>
        <position position="121"/>
    </location>
    <ligand>
        <name>substrate</name>
    </ligand>
</feature>
<feature type="binding site" evidence="2">
    <location>
        <position position="154"/>
    </location>
    <ligand>
        <name>NAD(+)</name>
        <dbReference type="ChEBI" id="CHEBI:57540"/>
    </ligand>
</feature>
<feature type="binding site" evidence="1">
    <location>
        <begin position="271"/>
        <end position="272"/>
    </location>
    <ligand>
        <name>substrate</name>
    </ligand>
</feature>
<feature type="binding site" evidence="1">
    <location>
        <position position="271"/>
    </location>
    <ligand>
        <name>NAD(+)</name>
        <dbReference type="ChEBI" id="CHEBI:57540"/>
    </ligand>
</feature>
<feature type="binding site" evidence="2">
    <location>
        <position position="298"/>
    </location>
    <ligand>
        <name>NAD(+)</name>
        <dbReference type="ChEBI" id="CHEBI:57540"/>
    </ligand>
</feature>
<feature type="binding site" evidence="1">
    <location>
        <position position="300"/>
    </location>
    <ligand>
        <name>NAD(+)</name>
        <dbReference type="ChEBI" id="CHEBI:57540"/>
    </ligand>
</feature>
<protein>
    <recommendedName>
        <fullName>Glycerol-3-phosphate dehydrogenase 1-like protein</fullName>
        <ecNumber>1.1.1.8</ecNumber>
    </recommendedName>
</protein>
<name>GPD1L_DANRE</name>
<dbReference type="EC" id="1.1.1.8"/>
<dbReference type="EMBL" id="BC083522">
    <property type="protein sequence ID" value="AAH83522.1"/>
    <property type="molecule type" value="mRNA"/>
</dbReference>
<dbReference type="RefSeq" id="NP_001005934.1">
    <property type="nucleotide sequence ID" value="NM_001005934.2"/>
</dbReference>
<dbReference type="RefSeq" id="XP_009290808.1">
    <property type="nucleotide sequence ID" value="XM_009292533.2"/>
</dbReference>
<dbReference type="RefSeq" id="XP_068070044.1">
    <property type="nucleotide sequence ID" value="XM_068213943.1"/>
</dbReference>
<dbReference type="RefSeq" id="XP_068070045.1">
    <property type="nucleotide sequence ID" value="XM_068213944.1"/>
</dbReference>
<dbReference type="SMR" id="Q5XIZ6"/>
<dbReference type="FunCoup" id="Q5XIZ6">
    <property type="interactions" value="1487"/>
</dbReference>
<dbReference type="STRING" id="7955.ENSDARP00000123149"/>
<dbReference type="PaxDb" id="7955-ENSDARP00000123149"/>
<dbReference type="Ensembl" id="ENSDART00000058550">
    <property type="protein sequence ID" value="ENSDARP00000058549"/>
    <property type="gene ID" value="ENSDARG00000040024"/>
</dbReference>
<dbReference type="Ensembl" id="ENSDART00000133642">
    <property type="protein sequence ID" value="ENSDARP00000123149"/>
    <property type="gene ID" value="ENSDARG00000040024"/>
</dbReference>
<dbReference type="GeneID" id="449663"/>
<dbReference type="KEGG" id="dre:449663"/>
<dbReference type="AGR" id="ZFIN:ZDB-GENE-041010-220"/>
<dbReference type="CTD" id="23171"/>
<dbReference type="ZFIN" id="ZDB-GENE-041010-220">
    <property type="gene designation" value="gpd1l"/>
</dbReference>
<dbReference type="eggNOG" id="KOG2711">
    <property type="taxonomic scope" value="Eukaryota"/>
</dbReference>
<dbReference type="HOGENOM" id="CLU_033449_2_2_1"/>
<dbReference type="InParanoid" id="Q5XIZ6"/>
<dbReference type="OMA" id="YDTPPMD"/>
<dbReference type="OrthoDB" id="10263760at2759"/>
<dbReference type="PhylomeDB" id="Q5XIZ6"/>
<dbReference type="TreeFam" id="TF300836"/>
<dbReference type="Reactome" id="R-DRE-1483166">
    <property type="pathway name" value="Synthesis of PA"/>
</dbReference>
<dbReference type="PRO" id="PR:Q5XIZ6"/>
<dbReference type="Proteomes" id="UP000000437">
    <property type="component" value="Chromosome 16"/>
</dbReference>
<dbReference type="Bgee" id="ENSDARG00000040024">
    <property type="expression patterns" value="Expressed in early embryo and 25 other cell types or tissues"/>
</dbReference>
<dbReference type="GO" id="GO:0005829">
    <property type="term" value="C:cytosol"/>
    <property type="evidence" value="ECO:0000318"/>
    <property type="project" value="GO_Central"/>
</dbReference>
<dbReference type="GO" id="GO:0141152">
    <property type="term" value="F:glycerol-3-phosphate dehydrogenase (NAD+) activity"/>
    <property type="evidence" value="ECO:0007669"/>
    <property type="project" value="UniProtKB-EC"/>
</dbReference>
<dbReference type="GO" id="GO:0051287">
    <property type="term" value="F:NAD binding"/>
    <property type="evidence" value="ECO:0007669"/>
    <property type="project" value="InterPro"/>
</dbReference>
<dbReference type="GO" id="GO:0042803">
    <property type="term" value="F:protein homodimerization activity"/>
    <property type="evidence" value="ECO:0007669"/>
    <property type="project" value="InterPro"/>
</dbReference>
<dbReference type="GO" id="GO:0005975">
    <property type="term" value="P:carbohydrate metabolic process"/>
    <property type="evidence" value="ECO:0007669"/>
    <property type="project" value="InterPro"/>
</dbReference>
<dbReference type="GO" id="GO:0046168">
    <property type="term" value="P:glycerol-3-phosphate catabolic process"/>
    <property type="evidence" value="ECO:0007669"/>
    <property type="project" value="InterPro"/>
</dbReference>
<dbReference type="FunFam" id="3.40.50.720:FF:000088">
    <property type="entry name" value="Glycerol-3-phosphate dehydrogenase [NAD(+)]"/>
    <property type="match status" value="1"/>
</dbReference>
<dbReference type="FunFam" id="1.10.1040.10:FF:000084">
    <property type="entry name" value="Glycerol-3-phosphate dehydrogenase [NAD(+)], cytoplasmic"/>
    <property type="match status" value="1"/>
</dbReference>
<dbReference type="Gene3D" id="1.10.1040.10">
    <property type="entry name" value="N-(1-d-carboxylethyl)-l-norvaline Dehydrogenase, domain 2"/>
    <property type="match status" value="1"/>
</dbReference>
<dbReference type="Gene3D" id="3.40.50.720">
    <property type="entry name" value="NAD(P)-binding Rossmann-like Domain"/>
    <property type="match status" value="1"/>
</dbReference>
<dbReference type="InterPro" id="IPR008927">
    <property type="entry name" value="6-PGluconate_DH-like_C_sf"/>
</dbReference>
<dbReference type="InterPro" id="IPR013328">
    <property type="entry name" value="6PGD_dom2"/>
</dbReference>
<dbReference type="InterPro" id="IPR006168">
    <property type="entry name" value="G3P_DH_NAD-dep"/>
</dbReference>
<dbReference type="InterPro" id="IPR006109">
    <property type="entry name" value="G3P_DH_NAD-dep_C"/>
</dbReference>
<dbReference type="InterPro" id="IPR017751">
    <property type="entry name" value="G3P_DH_NAD-dep_euk"/>
</dbReference>
<dbReference type="InterPro" id="IPR011128">
    <property type="entry name" value="G3P_DH_NAD-dep_N"/>
</dbReference>
<dbReference type="InterPro" id="IPR036291">
    <property type="entry name" value="NAD(P)-bd_dom_sf"/>
</dbReference>
<dbReference type="NCBIfam" id="TIGR03376">
    <property type="entry name" value="glycerol3P_DH"/>
    <property type="match status" value="1"/>
</dbReference>
<dbReference type="PANTHER" id="PTHR11728">
    <property type="entry name" value="GLYCEROL-3-PHOSPHATE DEHYDROGENASE"/>
    <property type="match status" value="1"/>
</dbReference>
<dbReference type="PANTHER" id="PTHR11728:SF7">
    <property type="entry name" value="GLYCEROL-3-PHOSPHATE DEHYDROGENASE 1-LIKE PROTEIN"/>
    <property type="match status" value="1"/>
</dbReference>
<dbReference type="Pfam" id="PF07479">
    <property type="entry name" value="NAD_Gly3P_dh_C"/>
    <property type="match status" value="1"/>
</dbReference>
<dbReference type="Pfam" id="PF01210">
    <property type="entry name" value="NAD_Gly3P_dh_N"/>
    <property type="match status" value="1"/>
</dbReference>
<dbReference type="PIRSF" id="PIRSF000114">
    <property type="entry name" value="Glycerol-3-P_dh"/>
    <property type="match status" value="1"/>
</dbReference>
<dbReference type="PRINTS" id="PR00077">
    <property type="entry name" value="GPDHDRGNASE"/>
</dbReference>
<dbReference type="SUPFAM" id="SSF48179">
    <property type="entry name" value="6-phosphogluconate dehydrogenase C-terminal domain-like"/>
    <property type="match status" value="1"/>
</dbReference>
<dbReference type="SUPFAM" id="SSF51735">
    <property type="entry name" value="NAD(P)-binding Rossmann-fold domains"/>
    <property type="match status" value="1"/>
</dbReference>
<organism>
    <name type="scientific">Danio rerio</name>
    <name type="common">Zebrafish</name>
    <name type="synonym">Brachydanio rerio</name>
    <dbReference type="NCBI Taxonomy" id="7955"/>
    <lineage>
        <taxon>Eukaryota</taxon>
        <taxon>Metazoa</taxon>
        <taxon>Chordata</taxon>
        <taxon>Craniata</taxon>
        <taxon>Vertebrata</taxon>
        <taxon>Euteleostomi</taxon>
        <taxon>Actinopterygii</taxon>
        <taxon>Neopterygii</taxon>
        <taxon>Teleostei</taxon>
        <taxon>Ostariophysi</taxon>
        <taxon>Cypriniformes</taxon>
        <taxon>Danionidae</taxon>
        <taxon>Danioninae</taxon>
        <taxon>Danio</taxon>
    </lineage>
</organism>